<keyword id="KW-0002">3D-structure</keyword>
<keyword id="KW-0007">Acetylation</keyword>
<keyword id="KW-0963">Cytoplasm</keyword>
<keyword id="KW-0206">Cytoskeleton</keyword>
<keyword id="KW-0945">Host-virus interaction</keyword>
<keyword id="KW-0539">Nucleus</keyword>
<keyword id="KW-1267">Proteomics identification</keyword>
<keyword id="KW-1185">Reference proteome</keyword>
<keyword id="KW-0694">RNA-binding</keyword>
<keyword id="KW-0804">Transcription</keyword>
<keyword id="KW-0805">Transcription regulation</keyword>
<sequence>MFRRKLTALDYHNPAGFNCKDETEFRNFIVWLEDQKIRHYKIEDRGNLRNIHSSDWPKFFEKYLRDVNCPFKIQDRQEAIDWLLGLAVRLEYGDNAEKYKDLVPDNSKTADNATKNAEPLINLDVNNPDFKAGVMALANLLQIQRHDDYLVMLKAIRILVQERLTQDAVAKANQTKEGLPVALDKHILGFDTGDAVLNEAAQILRLLHIEELRELQTKINEAIVAVQAIIADPKTDHRLGKVGR</sequence>
<feature type="chain" id="PRO_0000089956" description="RNA transcription, translation and transport factor protein">
    <location>
        <begin position="1"/>
        <end position="244"/>
    </location>
</feature>
<feature type="modified residue" description="N6-acetyllysine" evidence="14">
    <location>
        <position position="20"/>
    </location>
</feature>
<feature type="modified residue" description="N6-acetyllysine" evidence="14">
    <location>
        <position position="62"/>
    </location>
</feature>
<feature type="modified residue" description="N6-acetyllysine" evidence="14">
    <location>
        <position position="98"/>
    </location>
</feature>
<feature type="helix" evidence="15">
    <location>
        <begin position="2"/>
        <end position="11"/>
    </location>
</feature>
<feature type="helix" evidence="15">
    <location>
        <begin position="15"/>
        <end position="35"/>
    </location>
</feature>
<feature type="helix" evidence="15">
    <location>
        <begin position="42"/>
        <end position="45"/>
    </location>
</feature>
<feature type="helix" evidence="15">
    <location>
        <begin position="46"/>
        <end position="49"/>
    </location>
</feature>
<feature type="helix" evidence="15">
    <location>
        <begin position="56"/>
        <end position="66"/>
    </location>
</feature>
<feature type="helix" evidence="15">
    <location>
        <begin position="76"/>
        <end position="91"/>
    </location>
</feature>
<feature type="helix" evidence="15">
    <location>
        <begin position="97"/>
        <end position="100"/>
    </location>
</feature>
<evidence type="ECO:0000269" key="1">
    <source>
    </source>
</evidence>
<evidence type="ECO:0000269" key="2">
    <source>
    </source>
</evidence>
<evidence type="ECO:0000269" key="3">
    <source>
    </source>
</evidence>
<evidence type="ECO:0000269" key="4">
    <source>
    </source>
</evidence>
<evidence type="ECO:0000269" key="5">
    <source>
    </source>
</evidence>
<evidence type="ECO:0000269" key="6">
    <source>
    </source>
</evidence>
<evidence type="ECO:0000269" key="7">
    <source>
    </source>
</evidence>
<evidence type="ECO:0000269" key="8">
    <source>
    </source>
</evidence>
<evidence type="ECO:0000269" key="9">
    <source>
    </source>
</evidence>
<evidence type="ECO:0000303" key="10">
    <source>
    </source>
</evidence>
<evidence type="ECO:0000305" key="11"/>
<evidence type="ECO:0000305" key="12">
    <source>
    </source>
</evidence>
<evidence type="ECO:0000312" key="13">
    <source>
        <dbReference type="HGNC" id="HGNC:23169"/>
    </source>
</evidence>
<evidence type="ECO:0007744" key="14">
    <source>
    </source>
</evidence>
<evidence type="ECO:0007829" key="15">
    <source>
        <dbReference type="PDB" id="7P3A"/>
    </source>
</evidence>
<proteinExistence type="evidence at protein level"/>
<organism>
    <name type="scientific">Homo sapiens</name>
    <name type="common">Human</name>
    <dbReference type="NCBI Taxonomy" id="9606"/>
    <lineage>
        <taxon>Eukaryota</taxon>
        <taxon>Metazoa</taxon>
        <taxon>Chordata</taxon>
        <taxon>Craniata</taxon>
        <taxon>Vertebrata</taxon>
        <taxon>Euteleostomi</taxon>
        <taxon>Mammalia</taxon>
        <taxon>Eutheria</taxon>
        <taxon>Euarchontoglires</taxon>
        <taxon>Primates</taxon>
        <taxon>Haplorrhini</taxon>
        <taxon>Catarrhini</taxon>
        <taxon>Hominidae</taxon>
        <taxon>Homo</taxon>
    </lineage>
</organism>
<gene>
    <name evidence="13" type="primary">RTRAF</name>
    <name evidence="13" type="synonym">C14orf166</name>
    <name type="ORF">CGI-99</name>
</gene>
<reference key="1">
    <citation type="submission" date="1998-10" db="EMBL/GenBank/DDBJ databases">
        <authorList>
            <person name="Song H."/>
            <person name="Peng Y."/>
            <person name="Dai M."/>
            <person name="Huang Q."/>
            <person name="Mao Y."/>
            <person name="Zhang Q."/>
            <person name="Mao M."/>
            <person name="Fu G."/>
            <person name="Luo M."/>
            <person name="Chen J."/>
            <person name="Hu R."/>
        </authorList>
    </citation>
    <scope>NUCLEOTIDE SEQUENCE [MRNA]</scope>
    <source>
        <tissue>Pituitary</tissue>
    </source>
</reference>
<reference key="2">
    <citation type="journal article" date="2000" name="Genome Res.">
        <title>Identification of novel human genes evolutionarily conserved in Caenorhabditis elegans by comparative proteomics.</title>
        <authorList>
            <person name="Lai C.-H."/>
            <person name="Chou C.-Y."/>
            <person name="Ch'ang L.-Y."/>
            <person name="Liu C.-S."/>
            <person name="Lin W.-C."/>
        </authorList>
    </citation>
    <scope>NUCLEOTIDE SEQUENCE [LARGE SCALE MRNA]</scope>
</reference>
<reference key="3">
    <citation type="journal article" date="2004" name="Genome Res.">
        <title>The status, quality, and expansion of the NIH full-length cDNA project: the Mammalian Gene Collection (MGC).</title>
        <authorList>
            <consortium name="The MGC Project Team"/>
        </authorList>
    </citation>
    <scope>NUCLEOTIDE SEQUENCE [LARGE SCALE MRNA]</scope>
    <source>
        <tissue>Muscle</tissue>
    </source>
</reference>
<reference key="4">
    <citation type="journal article" date="2001" name="J. Virol.">
        <title>PA subunit from influenza virus polymerase complex interacts with a cellular protein with homology to a family of transcriptional activators.</title>
        <authorList>
            <person name="Huarte M."/>
            <person name="Sanz-Ezquerro J.J."/>
            <person name="Roncal F."/>
            <person name="Ortin J."/>
            <person name="Nieto A."/>
        </authorList>
    </citation>
    <scope>INTERACTION WITH INFLUENZA A VIRUS PA (MICROBIAL INFECTION)</scope>
</reference>
<reference key="5">
    <citation type="journal article" date="2004" name="FEBS Lett.">
        <title>A novel ninein-interaction protein, CGI-99, blocks ninein phosphorylation by GSK3beta and is highly expressed in brain tumors.</title>
        <authorList>
            <person name="Howng S.-L."/>
            <person name="Hsu H.-C."/>
            <person name="Cheng T.-S."/>
            <person name="Lee Y.-L."/>
            <person name="Chang L.-K."/>
            <person name="Lu P.-J."/>
            <person name="Hong Y.-R."/>
        </authorList>
    </citation>
    <scope>SUBCELLULAR LOCATION</scope>
    <scope>TISSUE SPECIFICITY</scope>
    <scope>INTERACTION WITH NIN</scope>
</reference>
<reference key="6">
    <citation type="journal article" date="2006" name="J. Mol. Biol.">
        <title>hCLE/CGI-99, a human protein that interacts with the influenza virus polymerase, is a mRNA transcription modulator.</title>
        <authorList>
            <person name="Perez-Gonzalez A."/>
            <person name="Rodriguez A."/>
            <person name="Huarte M."/>
            <person name="Salanueva I.J."/>
            <person name="Nieto A."/>
        </authorList>
    </citation>
    <scope>FUNCTION</scope>
    <scope>INTERACTION WITH POLR2A</scope>
</reference>
<reference key="7">
    <citation type="journal article" date="2009" name="Science">
        <title>Lysine acetylation targets protein complexes and co-regulates major cellular functions.</title>
        <authorList>
            <person name="Choudhary C."/>
            <person name="Kumar C."/>
            <person name="Gnad F."/>
            <person name="Nielsen M.L."/>
            <person name="Rehman M."/>
            <person name="Walther T.C."/>
            <person name="Olsen J.V."/>
            <person name="Mann M."/>
        </authorList>
    </citation>
    <scope>ACETYLATION [LARGE SCALE ANALYSIS] AT LYS-20; LYS-62 AND LYS-98</scope>
    <scope>IDENTIFICATION BY MASS SPECTROMETRY [LARGE SCALE ANALYSIS]</scope>
</reference>
<reference key="8">
    <citation type="journal article" date="2011" name="BMC Syst. Biol.">
        <title>Initial characterization of the human central proteome.</title>
        <authorList>
            <person name="Burkard T.R."/>
            <person name="Planyavsky M."/>
            <person name="Kaupe I."/>
            <person name="Breitwieser F.P."/>
            <person name="Buerckstuemmer T."/>
            <person name="Bennett K.L."/>
            <person name="Superti-Furga G."/>
            <person name="Colinge J."/>
        </authorList>
    </citation>
    <scope>IDENTIFICATION BY MASS SPECTROMETRY [LARGE SCALE ANALYSIS]</scope>
</reference>
<reference key="9">
    <citation type="journal article" date="2011" name="J. Proteome Res.">
        <title>Identification of hnRNPH1, NF45, and C14orf166 as novel host interacting partners of the mature hepatitis C virus core protein.</title>
        <authorList>
            <person name="Lee J.W."/>
            <person name="Liao P.C."/>
            <person name="Young K.C."/>
            <person name="Chang C.L."/>
            <person name="Chen S.S."/>
            <person name="Chang T.T."/>
            <person name="Lai M.D."/>
            <person name="Wang S.W."/>
        </authorList>
    </citation>
    <scope>INTERACTION WITH HEPATITIS C VIRUS CORE PROTEIN P19 (MICROBIAL INFECTION)</scope>
</reference>
<reference key="10">
    <citation type="journal article" date="2011" name="J. Virol.">
        <title>Cellular human CLE/C14orf166 protein interacts with influenza virus polymerase and is required for viral replication.</title>
        <authorList>
            <person name="Rodriguez A."/>
            <person name="Perez-Gonzalez A."/>
            <person name="Nieto A."/>
        </authorList>
    </citation>
    <scope>FUNCTION (MICROBIAL INFECTION)</scope>
    <scope>INTERACTION WITH INFLUENZA VIRUS PA; PB1; PB2 AND NP (MICROBIAL INFECTION)</scope>
</reference>
<reference key="11">
    <citation type="journal article" date="2011" name="Science">
        <title>HSPC117 is the essential subunit of a human tRNA splicing ligase complex.</title>
        <authorList>
            <person name="Popow J."/>
            <person name="Englert M."/>
            <person name="Weitzer S."/>
            <person name="Schleiffer A."/>
            <person name="Mierzwa B."/>
            <person name="Mechtler K."/>
            <person name="Trowitzsch S."/>
            <person name="Will C.L."/>
            <person name="Luhrmann R."/>
            <person name="Soll D."/>
            <person name="Martinez J."/>
        </authorList>
    </citation>
    <scope>IDENTIFICATION IN THE TRNA SPLICING LIGASE COMPLEX</scope>
</reference>
<reference key="12">
    <citation type="journal article" date="2014" name="J. Proteomics">
        <title>An enzyme assisted RP-RPLC approach for in-depth analysis of human liver phosphoproteome.</title>
        <authorList>
            <person name="Bian Y."/>
            <person name="Song C."/>
            <person name="Cheng K."/>
            <person name="Dong M."/>
            <person name="Wang F."/>
            <person name="Huang J."/>
            <person name="Sun D."/>
            <person name="Wang L."/>
            <person name="Ye M."/>
            <person name="Zou H."/>
        </authorList>
    </citation>
    <scope>IDENTIFICATION BY MASS SPECTROMETRY [LARGE SCALE ANALYSIS]</scope>
    <source>
        <tissue>Liver</tissue>
    </source>
</reference>
<reference key="13">
    <citation type="journal article" date="2014" name="Nature">
        <title>Analysis of orthologous groups reveals archease and DDX1 as tRNA splicing factors.</title>
        <authorList>
            <person name="Popow J."/>
            <person name="Jurkin J."/>
            <person name="Schleiffer A."/>
            <person name="Martinez J."/>
        </authorList>
    </citation>
    <scope>FUNCTION</scope>
    <scope>IDENTIFICATION IN THE TRNA SPLICING LIGASE COMPLEX</scope>
</reference>
<reference key="14">
    <citation type="journal article" date="2014" name="PLoS ONE">
        <title>hCLE/C14orf166 associates with DDX1-HSPC117-FAM98B in a novel transcription-dependent shuttling RNA-transporting complex.</title>
        <authorList>
            <person name="Perez-Gonzalez A."/>
            <person name="Pazo A."/>
            <person name="Navajas R."/>
            <person name="Ciordia S."/>
            <person name="Rodriguez-Frandsen A."/>
            <person name="Nieto A."/>
        </authorList>
    </citation>
    <scope>SUBCELLULAR LOCATION</scope>
    <scope>SUBUNIT</scope>
    <scope>INTERACTION WITH FAM98B; DDX1 AND RTCB</scope>
    <scope>RNA-BINDING</scope>
    <scope>FUNCTION</scope>
</reference>
<reference key="15">
    <citation type="journal article" date="2015" name="Proteomics">
        <title>N-terminome analysis of the human mitochondrial proteome.</title>
        <authorList>
            <person name="Vaca Jacome A.S."/>
            <person name="Rabilloud T."/>
            <person name="Schaeffer-Reiss C."/>
            <person name="Rompais M."/>
            <person name="Ayoub D."/>
            <person name="Lane L."/>
            <person name="Bairoch A."/>
            <person name="Van Dorsselaer A."/>
            <person name="Carapito C."/>
        </authorList>
    </citation>
    <scope>IDENTIFICATION BY MASS SPECTROMETRY [LARGE SCALE ANALYSIS]</scope>
</reference>
<reference key="16">
    <citation type="journal article" date="2016" name="Sci. Rep.">
        <title>hCLE/C14orf166, a cellular protein required for viral replication, is incorporated into influenza virus particles.</title>
        <authorList>
            <person name="Rodriguez-Frandsen A."/>
            <person name="de Lucas S."/>
            <person name="Perez-Gonzalez A."/>
            <person name="Perez-Cidoncha M."/>
            <person name="Roldan-Gomendio A."/>
            <person name="Pazo A."/>
            <person name="Marcos-Villar L."/>
            <person name="Landeras-Bueno S."/>
            <person name="Ortin J."/>
            <person name="Nieto A."/>
        </authorList>
    </citation>
    <scope>ASSOCIATION WITH INFLUENZA A VIRUS RNP AND RNA POLYMERASE SUBUNITS (MICROBIAL INFECTION)</scope>
    <scope>SUBCELLULAR LOCATION (MICROBIAL INFECTION)</scope>
    <scope>INDUCTION (MICROBIAL INFECTION)</scope>
</reference>
<reference key="17">
    <citation type="journal article" date="2017" name="Int. J. Biochem. Cell Biol.">
        <title>FAM98A associates with DDX1-C14orf166-FAM98B in a novel complex involved in colorectal cancer progression.</title>
        <authorList>
            <person name="Akter K.A."/>
            <person name="Mansour M.A."/>
            <person name="Hyodo T."/>
            <person name="Senga T."/>
        </authorList>
    </citation>
    <scope>INTERACTION WITH FAM98A</scope>
    <scope>IDENTIFICATION BY MASS SPECTROMETRY</scope>
</reference>
<name>RTRAF_HUMAN</name>
<dbReference type="EMBL" id="AF100755">
    <property type="protein sequence ID" value="AAD43019.1"/>
    <property type="molecule type" value="mRNA"/>
</dbReference>
<dbReference type="EMBL" id="AF151857">
    <property type="protein sequence ID" value="AAD34094.1"/>
    <property type="molecule type" value="mRNA"/>
</dbReference>
<dbReference type="EMBL" id="BC001722">
    <property type="protein sequence ID" value="AAH01722.1"/>
    <property type="molecule type" value="mRNA"/>
</dbReference>
<dbReference type="CCDS" id="CCDS9705.1"/>
<dbReference type="RefSeq" id="NP_057123.1">
    <property type="nucleotide sequence ID" value="NM_016039.3"/>
</dbReference>
<dbReference type="PDB" id="7P3A">
    <property type="method" value="X-ray"/>
    <property type="resolution" value="2.00 A"/>
    <property type="chains" value="A/B=2-101"/>
</dbReference>
<dbReference type="PDBsum" id="7P3A"/>
<dbReference type="SMR" id="Q9Y224"/>
<dbReference type="BioGRID" id="119650">
    <property type="interactions" value="222"/>
</dbReference>
<dbReference type="ComplexPortal" id="CPX-6411">
    <property type="entry name" value="tRNA-splicing ligase complex"/>
</dbReference>
<dbReference type="CORUM" id="Q9Y224"/>
<dbReference type="FunCoup" id="Q9Y224">
    <property type="interactions" value="2781"/>
</dbReference>
<dbReference type="IntAct" id="Q9Y224">
    <property type="interactions" value="105"/>
</dbReference>
<dbReference type="MINT" id="Q9Y224"/>
<dbReference type="STRING" id="9606.ENSP00000261700"/>
<dbReference type="GlyGen" id="Q9Y224">
    <property type="glycosylation" value="1 site, 1 O-linked glycan (1 site)"/>
</dbReference>
<dbReference type="iPTMnet" id="Q9Y224"/>
<dbReference type="MetOSite" id="Q9Y224"/>
<dbReference type="PhosphoSitePlus" id="Q9Y224"/>
<dbReference type="SwissPalm" id="Q9Y224"/>
<dbReference type="BioMuta" id="RTRAF"/>
<dbReference type="DMDM" id="20138086"/>
<dbReference type="REPRODUCTION-2DPAGE" id="Q9Y224"/>
<dbReference type="jPOST" id="Q9Y224"/>
<dbReference type="MassIVE" id="Q9Y224"/>
<dbReference type="PaxDb" id="9606-ENSP00000261700"/>
<dbReference type="PeptideAtlas" id="Q9Y224"/>
<dbReference type="ProteomicsDB" id="85609"/>
<dbReference type="Pumba" id="Q9Y224"/>
<dbReference type="TopDownProteomics" id="Q9Y224"/>
<dbReference type="Antibodypedia" id="10723">
    <property type="antibodies" value="324 antibodies from 27 providers"/>
</dbReference>
<dbReference type="DNASU" id="51637"/>
<dbReference type="Ensembl" id="ENST00000261700.8">
    <property type="protein sequence ID" value="ENSP00000261700.3"/>
    <property type="gene ID" value="ENSG00000087302.9"/>
</dbReference>
<dbReference type="GeneID" id="51637"/>
<dbReference type="KEGG" id="hsa:51637"/>
<dbReference type="MANE-Select" id="ENST00000261700.8">
    <property type="protein sequence ID" value="ENSP00000261700.3"/>
    <property type="RefSeq nucleotide sequence ID" value="NM_016039.3"/>
    <property type="RefSeq protein sequence ID" value="NP_057123.1"/>
</dbReference>
<dbReference type="UCSC" id="uc010aod.4">
    <property type="organism name" value="human"/>
</dbReference>
<dbReference type="AGR" id="HGNC:23169"/>
<dbReference type="CTD" id="51637"/>
<dbReference type="DisGeNET" id="51637"/>
<dbReference type="GeneCards" id="RTRAF"/>
<dbReference type="HGNC" id="HGNC:23169">
    <property type="gene designation" value="RTRAF"/>
</dbReference>
<dbReference type="HPA" id="ENSG00000087302">
    <property type="expression patterns" value="Low tissue specificity"/>
</dbReference>
<dbReference type="MIM" id="610858">
    <property type="type" value="gene"/>
</dbReference>
<dbReference type="neXtProt" id="NX_Q9Y224"/>
<dbReference type="OpenTargets" id="ENSG00000087302"/>
<dbReference type="PharmGKB" id="PA134953268"/>
<dbReference type="VEuPathDB" id="HostDB:ENSG00000087302"/>
<dbReference type="eggNOG" id="KOG4380">
    <property type="taxonomic scope" value="Eukaryota"/>
</dbReference>
<dbReference type="GeneTree" id="ENSGT00390000005163"/>
<dbReference type="HOGENOM" id="CLU_075085_0_0_1"/>
<dbReference type="InParanoid" id="Q9Y224"/>
<dbReference type="OMA" id="YPMRILR"/>
<dbReference type="OrthoDB" id="514167at2759"/>
<dbReference type="PAN-GO" id="Q9Y224">
    <property type="GO annotations" value="3 GO annotations based on evolutionary models"/>
</dbReference>
<dbReference type="PhylomeDB" id="Q9Y224"/>
<dbReference type="TreeFam" id="TF323606"/>
<dbReference type="BioCyc" id="MetaCyc:ENSG00000087302-MONOMER"/>
<dbReference type="PathwayCommons" id="Q9Y224"/>
<dbReference type="Reactome" id="R-HSA-6784531">
    <property type="pathway name" value="tRNA processing in the nucleus"/>
</dbReference>
<dbReference type="SignaLink" id="Q9Y224"/>
<dbReference type="BioGRID-ORCS" id="51637">
    <property type="hits" value="453 hits in 1126 CRISPR screens"/>
</dbReference>
<dbReference type="CD-CODE" id="232F8A39">
    <property type="entry name" value="P-body"/>
</dbReference>
<dbReference type="CD-CODE" id="91857CE7">
    <property type="entry name" value="Nucleolus"/>
</dbReference>
<dbReference type="CD-CODE" id="D8E9712B">
    <property type="entry name" value="Neuronal RNP granule"/>
</dbReference>
<dbReference type="CD-CODE" id="DEE660B4">
    <property type="entry name" value="Stress granule"/>
</dbReference>
<dbReference type="ChiTaRS" id="C14orf166">
    <property type="organism name" value="human"/>
</dbReference>
<dbReference type="GeneWiki" id="C14orf166"/>
<dbReference type="GenomeRNAi" id="51637"/>
<dbReference type="Pharos" id="Q9Y224">
    <property type="development level" value="Tbio"/>
</dbReference>
<dbReference type="PRO" id="PR:Q9Y224"/>
<dbReference type="Proteomes" id="UP000005640">
    <property type="component" value="Chromosome 14"/>
</dbReference>
<dbReference type="RNAct" id="Q9Y224">
    <property type="molecule type" value="protein"/>
</dbReference>
<dbReference type="Bgee" id="ENSG00000087302">
    <property type="expression patterns" value="Expressed in secondary oocyte and 202 other cell types or tissues"/>
</dbReference>
<dbReference type="ExpressionAtlas" id="Q9Y224">
    <property type="expression patterns" value="baseline and differential"/>
</dbReference>
<dbReference type="GO" id="GO:0005813">
    <property type="term" value="C:centrosome"/>
    <property type="evidence" value="ECO:0000314"/>
    <property type="project" value="UniProtKB"/>
</dbReference>
<dbReference type="GO" id="GO:0005737">
    <property type="term" value="C:cytoplasm"/>
    <property type="evidence" value="ECO:0000314"/>
    <property type="project" value="UniProtKB"/>
</dbReference>
<dbReference type="GO" id="GO:0005829">
    <property type="term" value="C:cytosol"/>
    <property type="evidence" value="ECO:0007669"/>
    <property type="project" value="UniProtKB-SubCell"/>
</dbReference>
<dbReference type="GO" id="GO:0072686">
    <property type="term" value="C:mitotic spindle"/>
    <property type="evidence" value="ECO:0000314"/>
    <property type="project" value="UniProtKB"/>
</dbReference>
<dbReference type="GO" id="GO:0005654">
    <property type="term" value="C:nucleoplasm"/>
    <property type="evidence" value="ECO:0000314"/>
    <property type="project" value="HPA"/>
</dbReference>
<dbReference type="GO" id="GO:0005634">
    <property type="term" value="C:nucleus"/>
    <property type="evidence" value="ECO:0000314"/>
    <property type="project" value="UniProtKB"/>
</dbReference>
<dbReference type="GO" id="GO:0048471">
    <property type="term" value="C:perinuclear region of cytoplasm"/>
    <property type="evidence" value="ECO:0000314"/>
    <property type="project" value="UniProtKB"/>
</dbReference>
<dbReference type="GO" id="GO:0072669">
    <property type="term" value="C:tRNA-splicing ligase complex"/>
    <property type="evidence" value="ECO:0000314"/>
    <property type="project" value="UniProtKB"/>
</dbReference>
<dbReference type="GO" id="GO:0042802">
    <property type="term" value="F:identical protein binding"/>
    <property type="evidence" value="ECO:0000353"/>
    <property type="project" value="IntAct"/>
</dbReference>
<dbReference type="GO" id="GO:0003723">
    <property type="term" value="F:RNA binding"/>
    <property type="evidence" value="ECO:0000314"/>
    <property type="project" value="UniProtKB"/>
</dbReference>
<dbReference type="GO" id="GO:0000993">
    <property type="term" value="F:RNA polymerase II complex binding"/>
    <property type="evidence" value="ECO:0000314"/>
    <property type="project" value="UniProtKB"/>
</dbReference>
<dbReference type="GO" id="GO:0006469">
    <property type="term" value="P:negative regulation of protein kinase activity"/>
    <property type="evidence" value="ECO:0000315"/>
    <property type="project" value="UniProtKB"/>
</dbReference>
<dbReference type="GO" id="GO:0045944">
    <property type="term" value="P:positive regulation of transcription by RNA polymerase II"/>
    <property type="evidence" value="ECO:0000315"/>
    <property type="project" value="UniProtKB"/>
</dbReference>
<dbReference type="GO" id="GO:0050658">
    <property type="term" value="P:RNA transport"/>
    <property type="evidence" value="ECO:0000304"/>
    <property type="project" value="UniProtKB"/>
</dbReference>
<dbReference type="GO" id="GO:0006388">
    <property type="term" value="P:tRNA splicing, via endonucleolytic cleavage and ligation"/>
    <property type="evidence" value="ECO:0000315"/>
    <property type="project" value="UniProtKB"/>
</dbReference>
<dbReference type="InterPro" id="IPR019265">
    <property type="entry name" value="RTRAF"/>
</dbReference>
<dbReference type="PANTHER" id="PTHR15924">
    <property type="entry name" value="CLE"/>
    <property type="match status" value="1"/>
</dbReference>
<dbReference type="Pfam" id="PF10036">
    <property type="entry name" value="RLL"/>
    <property type="match status" value="1"/>
</dbReference>
<comment type="function">
    <text evidence="2 6 7">RNA-binding protein involved in modulation of mRNA transcription by Polymerase II (PubMed:16950395). Component of the tRNA-splicing ligase complex and is required for tRNA ligation (PubMed:24870230). May be required for RNA transport (PubMed:24608264).</text>
</comment>
<comment type="function">
    <text evidence="5">(Microbial infection) In case of infection by influenza virus A (IVA), is involved in viral replication (PubMed:21900157).</text>
</comment>
<comment type="subunit">
    <text evidence="1 2 3 6 7 9 12">Homodimer (Probable). Interacts with FAM98A (via N- and C-terminus) (PubMed:28040436). Interacts with NIN; which may prevent phosphorylation of NIN (PubMed:15147888). Interacts with POLR2A (PubMed:16950395). Component of a tRNA-splicing ligase complex with FAM98B, DDX1 and RTCB (PubMed:21311021, PubMed:24608264, PubMed:24870230).</text>
</comment>
<comment type="subunit">
    <text evidence="4 5 8">(Microbial infection) Interacts with influenza A virus (IAV) RNA polymerase subunits PA, PB1 and PB2, and nucleocapsid NP (PubMed:21900157, PubMed:26864902). Associates with IAV polymerase complexes both in the nucleus and cytosol (PubMed:26864902). Associates with IAV ribonucleoproteins (vRNP) packaged in virions (PubMed:26864902). Interacts with hepatitis C virus core protein p19 (PubMed:21823664).</text>
</comment>
<comment type="interaction">
    <interactant intactId="EBI-1104547">
        <id>Q9Y224</id>
    </interactant>
    <interactant intactId="EBI-5458641">
        <id>Q9BVC5</id>
        <label>C2orf49</label>
    </interactant>
    <organismsDiffer>false</organismsDiffer>
    <experiments>2</experiments>
</comment>
<comment type="interaction">
    <interactant intactId="EBI-1104547">
        <id>Q9Y224</id>
    </interactant>
    <interactant intactId="EBI-358474">
        <id>Q92499</id>
        <label>DDX1</label>
    </interactant>
    <organismsDiffer>false</organismsDiffer>
    <experiments>4</experiments>
</comment>
<comment type="interaction">
    <interactant intactId="EBI-1104547">
        <id>Q9Y224</id>
    </interactant>
    <interactant intactId="EBI-1210765">
        <id>Q8NCA5</id>
        <label>FAM98A</label>
    </interactant>
    <organismsDiffer>false</organismsDiffer>
    <experiments>7</experiments>
</comment>
<comment type="interaction">
    <interactant intactId="EBI-1104547">
        <id>Q9Y224</id>
    </interactant>
    <interactant intactId="EBI-1043130">
        <id>Q52LJ0</id>
        <label>FAM98B</label>
    </interactant>
    <organismsDiffer>false</organismsDiffer>
    <experiments>2</experiments>
</comment>
<comment type="interaction">
    <interactant intactId="EBI-1104547">
        <id>Q9Y224</id>
    </interactant>
    <interactant intactId="EBI-1164022">
        <id>Q8N4C6</id>
        <label>NIN</label>
    </interactant>
    <organismsDiffer>false</organismsDiffer>
    <experiments>4</experiments>
</comment>
<comment type="interaction">
    <interactant intactId="EBI-1104547">
        <id>Q9Y224</id>
    </interactant>
    <interactant intactId="EBI-11974061">
        <id>Q9UIG4</id>
        <label>PSORS1C2</label>
    </interactant>
    <organismsDiffer>false</organismsDiffer>
    <experiments>3</experiments>
</comment>
<comment type="interaction">
    <interactant intactId="EBI-1104547">
        <id>Q9Y224</id>
    </interactant>
    <interactant intactId="EBI-2107208">
        <id>Q9Y3I0</id>
        <label>RTCB</label>
    </interactant>
    <organismsDiffer>false</organismsDiffer>
    <experiments>5</experiments>
</comment>
<comment type="interaction">
    <interactant intactId="EBI-1104547">
        <id>Q9Y224</id>
    </interactant>
    <interactant intactId="EBI-1104547">
        <id>Q9Y224</id>
        <label>RTRAF</label>
    </interactant>
    <organismsDiffer>false</organismsDiffer>
    <experiments>5</experiments>
</comment>
<comment type="interaction">
    <interactant intactId="EBI-1104547">
        <id>Q9Y224</id>
    </interactant>
    <interactant intactId="EBI-5800362">
        <id>P31343</id>
        <label>PA</label>
    </interactant>
    <organismsDiffer>true</organismsDiffer>
    <experiments>4</experiments>
</comment>
<comment type="interaction">
    <interactant intactId="EBI-1104547">
        <id>Q9Y224</id>
    </interactant>
    <interactant intactId="EBI-11514477">
        <id>Q67020</id>
        <label>PA</label>
    </interactant>
    <organismsDiffer>true</organismsDiffer>
    <experiments>3</experiments>
</comment>
<comment type="subcellular location">
    <subcellularLocation>
        <location evidence="1 6">Nucleus</location>
    </subcellularLocation>
    <subcellularLocation>
        <location evidence="1 6">Cytoplasm</location>
        <location evidence="1 6">Cytosol</location>
    </subcellularLocation>
    <subcellularLocation>
        <location evidence="1">Cytoplasm</location>
        <location evidence="1">Perinuclear region</location>
    </subcellularLocation>
    <subcellularLocation>
        <location evidence="1">Cytoplasm</location>
        <location evidence="1">Cytoskeleton</location>
        <location evidence="1">Microtubule organizing center</location>
        <location evidence="1">Centrosome</location>
    </subcellularLocation>
    <text evidence="1 6">May localize at the centrosome during mitosis (PubMed:15147888). Shuttles between the cytosol and the nucleus: enters into the nucleus in case of active transcription while it accumulates in cytosol when transcription level is low (PubMed:24608264).</text>
</comment>
<comment type="subcellular location">
    <subcellularLocation>
        <location evidence="8">Nucleus</location>
    </subcellularLocation>
    <subcellularLocation>
        <location evidence="8">Cytoplasm</location>
    </subcellularLocation>
    <text evidence="5 8">(Microbial infection) Following influenza A virus (IAV) infection, included in influenza A virions via its association with packaged viral ribonucleoproteins (vRNP) in the nucleus and cytoplasm (PubMed:21900157, PubMed:26864902).</text>
</comment>
<comment type="tissue specificity">
    <text evidence="1">Widely expressed. Expressed at high level in heart and skeletal muscle. Expressed at intermediate level in liver, pancreas, fetal brain and fetal lung. Weakly expressed in adult brain, adult lung, placenta, fetal liver and fetal kidney. Overexpressed in many brain tumors.</text>
</comment>
<comment type="induction">
    <text evidence="8">(Microbial infection) Up-regulated specifically following influenza A virus (IAV) infection in a viral replication-dependent manner (at protein level) (PubMed:26864902).</text>
</comment>
<comment type="similarity">
    <text evidence="11">Belongs to the RTRAF family.</text>
</comment>
<protein>
    <recommendedName>
        <fullName evidence="13">RNA transcription, translation and transport factor protein</fullName>
    </recommendedName>
    <alternativeName>
        <fullName>CLE7 homolog</fullName>
        <shortName>CLE</shortName>
        <shortName evidence="10">hCLE</shortName>
    </alternativeName>
</protein>
<accession>Q9Y224</accession>